<sequence>MAKLITKNKQVFRDYEIIDKLEAGIVLQGWEVKSIRASDVNLKGSYCVFKANELYLINSYIGLYMAVKGDERQSRKLLLHKNQLRRLKQKVESQSLSIVPLSLYWNKKSKVKAEIALVRGLKKHDKREKLKKEETNKKLKKLISY</sequence>
<organism>
    <name type="scientific">Mycoplasmopsis pulmonis (strain UAB CTIP)</name>
    <name type="common">Mycoplasma pulmonis</name>
    <dbReference type="NCBI Taxonomy" id="272635"/>
    <lineage>
        <taxon>Bacteria</taxon>
        <taxon>Bacillati</taxon>
        <taxon>Mycoplasmatota</taxon>
        <taxon>Mycoplasmoidales</taxon>
        <taxon>Metamycoplasmataceae</taxon>
        <taxon>Mycoplasmopsis</taxon>
    </lineage>
</organism>
<keyword id="KW-0963">Cytoplasm</keyword>
<keyword id="KW-1185">Reference proteome</keyword>
<keyword id="KW-0694">RNA-binding</keyword>
<dbReference type="EMBL" id="AL445564">
    <property type="protein sequence ID" value="CAC13525.1"/>
    <property type="molecule type" value="Genomic_DNA"/>
</dbReference>
<dbReference type="PIR" id="H90555">
    <property type="entry name" value="H90555"/>
</dbReference>
<dbReference type="RefSeq" id="WP_010925156.1">
    <property type="nucleotide sequence ID" value="NC_002771.1"/>
</dbReference>
<dbReference type="SMR" id="Q98QK9"/>
<dbReference type="STRING" id="272635.gene:17576943"/>
<dbReference type="KEGG" id="mpu:MYPU_3520"/>
<dbReference type="eggNOG" id="COG0691">
    <property type="taxonomic scope" value="Bacteria"/>
</dbReference>
<dbReference type="HOGENOM" id="CLU_108953_3_1_14"/>
<dbReference type="BioCyc" id="MPUL272635:G1GT6-352-MONOMER"/>
<dbReference type="Proteomes" id="UP000000528">
    <property type="component" value="Chromosome"/>
</dbReference>
<dbReference type="GO" id="GO:0005829">
    <property type="term" value="C:cytosol"/>
    <property type="evidence" value="ECO:0007669"/>
    <property type="project" value="TreeGrafter"/>
</dbReference>
<dbReference type="GO" id="GO:0003723">
    <property type="term" value="F:RNA binding"/>
    <property type="evidence" value="ECO:0007669"/>
    <property type="project" value="UniProtKB-UniRule"/>
</dbReference>
<dbReference type="GO" id="GO:0070929">
    <property type="term" value="P:trans-translation"/>
    <property type="evidence" value="ECO:0007669"/>
    <property type="project" value="UniProtKB-UniRule"/>
</dbReference>
<dbReference type="CDD" id="cd09294">
    <property type="entry name" value="SmpB"/>
    <property type="match status" value="1"/>
</dbReference>
<dbReference type="Gene3D" id="2.40.280.10">
    <property type="match status" value="1"/>
</dbReference>
<dbReference type="HAMAP" id="MF_00023">
    <property type="entry name" value="SmpB"/>
    <property type="match status" value="1"/>
</dbReference>
<dbReference type="InterPro" id="IPR023620">
    <property type="entry name" value="SmpB"/>
</dbReference>
<dbReference type="InterPro" id="IPR000037">
    <property type="entry name" value="SsrA-bd_prot"/>
</dbReference>
<dbReference type="InterPro" id="IPR020081">
    <property type="entry name" value="SsrA-bd_prot_CS"/>
</dbReference>
<dbReference type="NCBIfam" id="NF003843">
    <property type="entry name" value="PRK05422.1"/>
    <property type="match status" value="1"/>
</dbReference>
<dbReference type="NCBIfam" id="TIGR00086">
    <property type="entry name" value="smpB"/>
    <property type="match status" value="1"/>
</dbReference>
<dbReference type="PANTHER" id="PTHR30308:SF2">
    <property type="entry name" value="SSRA-BINDING PROTEIN"/>
    <property type="match status" value="1"/>
</dbReference>
<dbReference type="PANTHER" id="PTHR30308">
    <property type="entry name" value="TMRNA-BINDING COMPONENT OF TRANS-TRANSLATION TAGGING COMPLEX"/>
    <property type="match status" value="1"/>
</dbReference>
<dbReference type="Pfam" id="PF01668">
    <property type="entry name" value="SmpB"/>
    <property type="match status" value="1"/>
</dbReference>
<dbReference type="SUPFAM" id="SSF74982">
    <property type="entry name" value="Small protein B (SmpB)"/>
    <property type="match status" value="1"/>
</dbReference>
<dbReference type="PROSITE" id="PS01317">
    <property type="entry name" value="SSRP"/>
    <property type="match status" value="1"/>
</dbReference>
<accession>Q98QK9</accession>
<proteinExistence type="inferred from homology"/>
<reference key="1">
    <citation type="journal article" date="2001" name="Nucleic Acids Res.">
        <title>The complete genome sequence of the murine respiratory pathogen Mycoplasma pulmonis.</title>
        <authorList>
            <person name="Chambaud I."/>
            <person name="Heilig R."/>
            <person name="Ferris S."/>
            <person name="Barbe V."/>
            <person name="Samson D."/>
            <person name="Galisson F."/>
            <person name="Moszer I."/>
            <person name="Dybvig K."/>
            <person name="Wroblewski H."/>
            <person name="Viari A."/>
            <person name="Rocha E.P.C."/>
            <person name="Blanchard A."/>
        </authorList>
    </citation>
    <scope>NUCLEOTIDE SEQUENCE [LARGE SCALE GENOMIC DNA]</scope>
    <source>
        <strain>UAB CTIP</strain>
    </source>
</reference>
<feature type="chain" id="PRO_0000102990" description="SsrA-binding protein">
    <location>
        <begin position="1"/>
        <end position="145"/>
    </location>
</feature>
<gene>
    <name evidence="1" type="primary">smpB</name>
    <name type="ordered locus">MYPU_3520</name>
</gene>
<protein>
    <recommendedName>
        <fullName evidence="1">SsrA-binding protein</fullName>
    </recommendedName>
    <alternativeName>
        <fullName evidence="1">Small protein B</fullName>
    </alternativeName>
</protein>
<name>SSRP_MYCPU</name>
<evidence type="ECO:0000255" key="1">
    <source>
        <dbReference type="HAMAP-Rule" id="MF_00023"/>
    </source>
</evidence>
<comment type="function">
    <text evidence="1">Required for rescue of stalled ribosomes mediated by trans-translation. Binds to transfer-messenger RNA (tmRNA), required for stable association of tmRNA with ribosomes. tmRNA and SmpB together mimic tRNA shape, replacing the anticodon stem-loop with SmpB. tmRNA is encoded by the ssrA gene; the 2 termini fold to resemble tRNA(Ala) and it encodes a 'tag peptide', a short internal open reading frame. During trans-translation Ala-aminoacylated tmRNA acts like a tRNA, entering the A-site of stalled ribosomes, displacing the stalled mRNA. The ribosome then switches to translate the ORF on the tmRNA; the nascent peptide is terminated with the 'tag peptide' encoded by the tmRNA and targeted for degradation. The ribosome is freed to recommence translation, which seems to be the essential function of trans-translation.</text>
</comment>
<comment type="subcellular location">
    <subcellularLocation>
        <location evidence="1">Cytoplasm</location>
    </subcellularLocation>
    <text evidence="1">The tmRNA-SmpB complex associates with stalled 70S ribosomes.</text>
</comment>
<comment type="similarity">
    <text evidence="1">Belongs to the SmpB family.</text>
</comment>